<feature type="chain" id="PRO_0000259015" description="Nucleotide-binding protein Tbd_0529">
    <location>
        <begin position="1"/>
        <end position="278"/>
    </location>
</feature>
<feature type="binding site" evidence="1">
    <location>
        <begin position="8"/>
        <end position="15"/>
    </location>
    <ligand>
        <name>ATP</name>
        <dbReference type="ChEBI" id="CHEBI:30616"/>
    </ligand>
</feature>
<feature type="binding site" evidence="1">
    <location>
        <begin position="57"/>
        <end position="60"/>
    </location>
    <ligand>
        <name>GTP</name>
        <dbReference type="ChEBI" id="CHEBI:37565"/>
    </ligand>
</feature>
<gene>
    <name type="ordered locus">Tbd_0529</name>
</gene>
<protein>
    <recommendedName>
        <fullName evidence="1">Nucleotide-binding protein Tbd_0529</fullName>
    </recommendedName>
</protein>
<proteinExistence type="inferred from homology"/>
<organism>
    <name type="scientific">Thiobacillus denitrificans (strain ATCC 25259 / T1)</name>
    <dbReference type="NCBI Taxonomy" id="292415"/>
    <lineage>
        <taxon>Bacteria</taxon>
        <taxon>Pseudomonadati</taxon>
        <taxon>Pseudomonadota</taxon>
        <taxon>Betaproteobacteria</taxon>
        <taxon>Nitrosomonadales</taxon>
        <taxon>Thiobacillaceae</taxon>
        <taxon>Thiobacillus</taxon>
    </lineage>
</organism>
<sequence length="278" mass="30871">MQIVLVSGLSGSGKSIATAVLEDVGYYCVDNLPLAMLQPLVEYLKQEGYARVAIAIDARSGASFAQLPQIAENLRAQGADLRVIFLEAKTLSLVKRFSETRRRHPLSSDTVSLPEAIQLERETLADVAPLAHRIDTSDLSASALRLWIKDLVGPDRSRITLLFESFGFKHGIPLDADLVFDVRCLPNPHYVEELRPFTGRDPGVREFLEASPDAMALLADIRGFVENWLPCFIRDHRAYLTVAIGCTGGRHRSVYFAETLAAAFQAREQVLVRHRELS</sequence>
<accession>Q3SLD3</accession>
<reference key="1">
    <citation type="journal article" date="2006" name="J. Bacteriol.">
        <title>The genome sequence of the obligately chemolithoautotrophic, facultatively anaerobic bacterium Thiobacillus denitrificans.</title>
        <authorList>
            <person name="Beller H.R."/>
            <person name="Chain P.S."/>
            <person name="Letain T.E."/>
            <person name="Chakicherla A."/>
            <person name="Larimer F.W."/>
            <person name="Richardson P.M."/>
            <person name="Coleman M.A."/>
            <person name="Wood A.P."/>
            <person name="Kelly D.P."/>
        </authorList>
    </citation>
    <scope>NUCLEOTIDE SEQUENCE [LARGE SCALE GENOMIC DNA]</scope>
    <source>
        <strain>ATCC 25259 / T1</strain>
    </source>
</reference>
<comment type="function">
    <text evidence="1">Displays ATPase and GTPase activities.</text>
</comment>
<comment type="similarity">
    <text evidence="1">Belongs to the RapZ-like family.</text>
</comment>
<keyword id="KW-0067">ATP-binding</keyword>
<keyword id="KW-0342">GTP-binding</keyword>
<keyword id="KW-0547">Nucleotide-binding</keyword>
<keyword id="KW-1185">Reference proteome</keyword>
<dbReference type="EMBL" id="CP000116">
    <property type="protein sequence ID" value="AAZ96482.1"/>
    <property type="molecule type" value="Genomic_DNA"/>
</dbReference>
<dbReference type="RefSeq" id="WP_011311041.1">
    <property type="nucleotide sequence ID" value="NC_007404.1"/>
</dbReference>
<dbReference type="SMR" id="Q3SLD3"/>
<dbReference type="STRING" id="292415.Tbd_0529"/>
<dbReference type="KEGG" id="tbd:Tbd_0529"/>
<dbReference type="eggNOG" id="COG1660">
    <property type="taxonomic scope" value="Bacteria"/>
</dbReference>
<dbReference type="HOGENOM" id="CLU_059558_1_1_4"/>
<dbReference type="OrthoDB" id="9784461at2"/>
<dbReference type="Proteomes" id="UP000008291">
    <property type="component" value="Chromosome"/>
</dbReference>
<dbReference type="GO" id="GO:0005524">
    <property type="term" value="F:ATP binding"/>
    <property type="evidence" value="ECO:0007669"/>
    <property type="project" value="UniProtKB-UniRule"/>
</dbReference>
<dbReference type="GO" id="GO:0005525">
    <property type="term" value="F:GTP binding"/>
    <property type="evidence" value="ECO:0007669"/>
    <property type="project" value="UniProtKB-UniRule"/>
</dbReference>
<dbReference type="HAMAP" id="MF_00636">
    <property type="entry name" value="RapZ_like"/>
    <property type="match status" value="1"/>
</dbReference>
<dbReference type="InterPro" id="IPR027417">
    <property type="entry name" value="P-loop_NTPase"/>
</dbReference>
<dbReference type="InterPro" id="IPR005337">
    <property type="entry name" value="RapZ-like"/>
</dbReference>
<dbReference type="InterPro" id="IPR053930">
    <property type="entry name" value="RapZ-like_N"/>
</dbReference>
<dbReference type="InterPro" id="IPR053931">
    <property type="entry name" value="RapZ_C"/>
</dbReference>
<dbReference type="NCBIfam" id="NF003828">
    <property type="entry name" value="PRK05416.1"/>
    <property type="match status" value="1"/>
</dbReference>
<dbReference type="PANTHER" id="PTHR30448">
    <property type="entry name" value="RNASE ADAPTER PROTEIN RAPZ"/>
    <property type="match status" value="1"/>
</dbReference>
<dbReference type="PANTHER" id="PTHR30448:SF0">
    <property type="entry name" value="RNASE ADAPTER PROTEIN RAPZ"/>
    <property type="match status" value="1"/>
</dbReference>
<dbReference type="Pfam" id="PF22740">
    <property type="entry name" value="PapZ_C"/>
    <property type="match status" value="1"/>
</dbReference>
<dbReference type="Pfam" id="PF03668">
    <property type="entry name" value="RapZ-like_N"/>
    <property type="match status" value="1"/>
</dbReference>
<dbReference type="PIRSF" id="PIRSF005052">
    <property type="entry name" value="P-loopkin"/>
    <property type="match status" value="1"/>
</dbReference>
<dbReference type="SUPFAM" id="SSF52540">
    <property type="entry name" value="P-loop containing nucleoside triphosphate hydrolases"/>
    <property type="match status" value="1"/>
</dbReference>
<name>Y529_THIDA</name>
<evidence type="ECO:0000255" key="1">
    <source>
        <dbReference type="HAMAP-Rule" id="MF_00636"/>
    </source>
</evidence>